<sequence>MSSGECSNVQLDDHRKNNLEIDEGREFESKEEAFEFYKEYANSVGFTTIIKASRRSRMTGKFIDAKFVCTRYGSKKEDIDTGLGTDGFNIPQARKRGRINRSSSKTDCKAFLHVKRRQDGRWVVRSLVKEHNHEIFTGQADSLRELSGRRKLEKLNGAIVKEVKSRKLEDGDVERLLNFFTDMQVENPFFFYSIDLSEEQSLRNIFWVDAKAMHGCRPRVILTKHDQMLKEAVLEVFPSSRHCFYMWDTLGQMPEKLGHVIRLEKKLVDEINDAIYGSCQSEDFEKNWWEVVDRFHMRDNVWLQSLYEDREYWVPVYMKDVSLAGMCTAQRSDSVNSGLDKYIQRKTTFKAFLEQYKKMIQERYEEEEKSEIETLYKQPGLKSPSPFGKQMAEVYTREMFKKFQVEVLGGVACHPKKESEEDGVNKRTFRVQDYEQNRSFVVVWNSESSEVVCSCRLFELKGFLCRHAMIVLQMSGELSIPSQYVLKRWTKDAKSREVMESDQTDVESTKAQRYKDLCLRSLKLSEEASLSEESYNAVVNVLNEALRKWENKSNLIQNLEESESVTAQDLPIHEEQNNTYDMNKDDNVADTGQEYSLQEVWKVTALQEQRNRYSILDDYLSAQHMSHEMGQINSMASNRNGYCSVHQNIHSLQGQSITHPRLYETEQSSFRPEAMYERLQDMVKDLN</sequence>
<protein>
    <recommendedName>
        <fullName>Protein FAR1-RELATED SEQUENCE 1</fullName>
    </recommendedName>
</protein>
<dbReference type="EMBL" id="AY763412">
    <property type="protein sequence ID" value="AAV33403.1"/>
    <property type="molecule type" value="mRNA"/>
</dbReference>
<dbReference type="EMBL" id="AL021637">
    <property type="protein sequence ID" value="CAA16607.1"/>
    <property type="status" value="ALT_SEQ"/>
    <property type="molecule type" value="Genomic_DNA"/>
</dbReference>
<dbReference type="EMBL" id="AL161552">
    <property type="protein sequence ID" value="CAB78999.1"/>
    <property type="status" value="ALT_SEQ"/>
    <property type="molecule type" value="Genomic_DNA"/>
</dbReference>
<dbReference type="EMBL" id="CP002687">
    <property type="status" value="NOT_ANNOTATED_CDS"/>
    <property type="molecule type" value="Genomic_DNA"/>
</dbReference>
<dbReference type="PIR" id="T04883">
    <property type="entry name" value="T04883"/>
</dbReference>
<dbReference type="FunCoup" id="Q5UBY2">
    <property type="interactions" value="1"/>
</dbReference>
<dbReference type="IntAct" id="Q5UBY2">
    <property type="interactions" value="1"/>
</dbReference>
<dbReference type="STRING" id="3702.Q5UBY2"/>
<dbReference type="PaxDb" id="3702-AT4G19990.2"/>
<dbReference type="ProteomicsDB" id="228953">
    <molecule id="Q5UBY2-1"/>
</dbReference>
<dbReference type="Araport" id="AT4G19990"/>
<dbReference type="TAIR" id="AT4G19990">
    <property type="gene designation" value="FRS1"/>
</dbReference>
<dbReference type="eggNOG" id="ENOG502QQDK">
    <property type="taxonomic scope" value="Eukaryota"/>
</dbReference>
<dbReference type="InParanoid" id="Q5UBY2"/>
<dbReference type="PhylomeDB" id="Q5UBY2"/>
<dbReference type="PRO" id="PR:Q5UBY2"/>
<dbReference type="Proteomes" id="UP000006548">
    <property type="component" value="Chromosome 4"/>
</dbReference>
<dbReference type="ExpressionAtlas" id="Q5UBY2">
    <property type="expression patterns" value="baseline and differential"/>
</dbReference>
<dbReference type="GO" id="GO:0005634">
    <property type="term" value="C:nucleus"/>
    <property type="evidence" value="ECO:0007669"/>
    <property type="project" value="UniProtKB-SubCell"/>
</dbReference>
<dbReference type="GO" id="GO:0008270">
    <property type="term" value="F:zinc ion binding"/>
    <property type="evidence" value="ECO:0007669"/>
    <property type="project" value="UniProtKB-KW"/>
</dbReference>
<dbReference type="GO" id="GO:0006355">
    <property type="term" value="P:regulation of DNA-templated transcription"/>
    <property type="evidence" value="ECO:0007669"/>
    <property type="project" value="InterPro"/>
</dbReference>
<dbReference type="InterPro" id="IPR004330">
    <property type="entry name" value="FAR1_DNA_bnd_dom"/>
</dbReference>
<dbReference type="InterPro" id="IPR031052">
    <property type="entry name" value="FHY3/FAR1"/>
</dbReference>
<dbReference type="InterPro" id="IPR006564">
    <property type="entry name" value="Znf_PMZ"/>
</dbReference>
<dbReference type="InterPro" id="IPR007527">
    <property type="entry name" value="Znf_SWIM"/>
</dbReference>
<dbReference type="PANTHER" id="PTHR31669:SF62">
    <property type="entry name" value="PROTEIN FAR1-RELATED SEQUENCE 1"/>
    <property type="match status" value="1"/>
</dbReference>
<dbReference type="PANTHER" id="PTHR31669">
    <property type="entry name" value="PROTEIN FAR1-RELATED SEQUENCE 10-RELATED"/>
    <property type="match status" value="1"/>
</dbReference>
<dbReference type="Pfam" id="PF03101">
    <property type="entry name" value="FAR1"/>
    <property type="match status" value="1"/>
</dbReference>
<dbReference type="Pfam" id="PF04434">
    <property type="entry name" value="SWIM"/>
    <property type="match status" value="1"/>
</dbReference>
<dbReference type="SMART" id="SM00575">
    <property type="entry name" value="ZnF_PMZ"/>
    <property type="match status" value="1"/>
</dbReference>
<dbReference type="PROSITE" id="PS50966">
    <property type="entry name" value="ZF_SWIM"/>
    <property type="match status" value="1"/>
</dbReference>
<gene>
    <name type="primary">FRS1</name>
    <name type="ordered locus">At4g19990</name>
    <name type="ORF">F18F4.90</name>
</gene>
<evidence type="ECO:0000255" key="1"/>
<evidence type="ECO:0000255" key="2">
    <source>
        <dbReference type="PROSITE-ProRule" id="PRU00325"/>
    </source>
</evidence>
<evidence type="ECO:0000269" key="3">
    <source>
    </source>
</evidence>
<evidence type="ECO:0000305" key="4"/>
<proteinExistence type="evidence at protein level"/>
<comment type="function">
    <text>Putative transcription activator involved in regulating light control of development.</text>
</comment>
<comment type="interaction">
    <interactant intactId="EBI-625440">
        <id>Q5UBY2</id>
    </interactant>
    <interactant intactId="EBI-625464">
        <id>Q9SWG3</id>
        <label>FAR1</label>
    </interactant>
    <organismsDiffer>false</organismsDiffer>
    <experiments>3</experiments>
</comment>
<comment type="subcellular location">
    <subcellularLocation>
        <location evidence="3">Nucleus</location>
    </subcellularLocation>
    <text>The nuclear localization is independent of the light treatment.</text>
</comment>
<comment type="alternative products">
    <event type="alternative splicing"/>
    <isoform>
        <id>Q5UBY2-1</id>
        <name>1</name>
        <sequence type="displayed"/>
    </isoform>
    <text>A number of isoforms are produced. According to EST sequences.</text>
</comment>
<comment type="tissue specificity">
    <text evidence="3">Expressed in rosette and cauline leaves, inflorescences stems, flowers and siliques.</text>
</comment>
<comment type="similarity">
    <text evidence="4">Belongs to the FHY3/FAR1 family.</text>
</comment>
<comment type="sequence caution" evidence="4">
    <conflict type="erroneous gene model prediction">
        <sequence resource="EMBL-CDS" id="CAA16607"/>
    </conflict>
</comment>
<comment type="sequence caution" evidence="4">
    <conflict type="erroneous gene model prediction">
        <sequence resource="EMBL-CDS" id="CAB78999"/>
    </conflict>
</comment>
<feature type="chain" id="PRO_0000363479" description="Protein FAR1-RELATED SEQUENCE 1">
    <location>
        <begin position="1"/>
        <end position="687"/>
    </location>
</feature>
<feature type="domain" description="FAR1">
    <location>
        <begin position="35"/>
        <end position="137"/>
    </location>
</feature>
<feature type="domain" description="MULE">
    <location>
        <begin position="211"/>
        <end position="254"/>
    </location>
</feature>
<feature type="zinc finger region" description="SWIM-type" evidence="2">
    <location>
        <begin position="440"/>
        <end position="476"/>
    </location>
</feature>
<feature type="coiled-coil region" evidence="1">
    <location>
        <begin position="540"/>
        <end position="562"/>
    </location>
</feature>
<keyword id="KW-0025">Alternative splicing</keyword>
<keyword id="KW-0175">Coiled coil</keyword>
<keyword id="KW-0479">Metal-binding</keyword>
<keyword id="KW-0539">Nucleus</keyword>
<keyword id="KW-1185">Reference proteome</keyword>
<keyword id="KW-0862">Zinc</keyword>
<keyword id="KW-0863">Zinc-finger</keyword>
<accession>Q5UBY2</accession>
<accession>O49426</accession>
<name>FRS1_ARATH</name>
<reference key="1">
    <citation type="journal article" date="2004" name="Plant Physiol.">
        <title>Arabidopsis FHY3/FAR1 gene family and distinct roles of its members in light control of Arabidopsis development.</title>
        <authorList>
            <person name="Lin R."/>
            <person name="Wang H."/>
        </authorList>
    </citation>
    <scope>NUCLEOTIDE SEQUENCE [MRNA]</scope>
    <scope>TISSUE SPECIFICITY</scope>
    <scope>SUBCELLULAR LOCATION</scope>
    <scope>GENE FAMILY</scope>
    <scope>NOMENCLATURE</scope>
</reference>
<reference key="2">
    <citation type="journal article" date="1999" name="Nature">
        <title>Sequence and analysis of chromosome 4 of the plant Arabidopsis thaliana.</title>
        <authorList>
            <person name="Mayer K.F.X."/>
            <person name="Schueller C."/>
            <person name="Wambutt R."/>
            <person name="Murphy G."/>
            <person name="Volckaert G."/>
            <person name="Pohl T."/>
            <person name="Duesterhoeft A."/>
            <person name="Stiekema W."/>
            <person name="Entian K.-D."/>
            <person name="Terryn N."/>
            <person name="Harris B."/>
            <person name="Ansorge W."/>
            <person name="Brandt P."/>
            <person name="Grivell L.A."/>
            <person name="Rieger M."/>
            <person name="Weichselgartner M."/>
            <person name="de Simone V."/>
            <person name="Obermaier B."/>
            <person name="Mache R."/>
            <person name="Mueller M."/>
            <person name="Kreis M."/>
            <person name="Delseny M."/>
            <person name="Puigdomenech P."/>
            <person name="Watson M."/>
            <person name="Schmidtheini T."/>
            <person name="Reichert B."/>
            <person name="Portetelle D."/>
            <person name="Perez-Alonso M."/>
            <person name="Boutry M."/>
            <person name="Bancroft I."/>
            <person name="Vos P."/>
            <person name="Hoheisel J."/>
            <person name="Zimmermann W."/>
            <person name="Wedler H."/>
            <person name="Ridley P."/>
            <person name="Langham S.-A."/>
            <person name="McCullagh B."/>
            <person name="Bilham L."/>
            <person name="Robben J."/>
            <person name="van der Schueren J."/>
            <person name="Grymonprez B."/>
            <person name="Chuang Y.-J."/>
            <person name="Vandenbussche F."/>
            <person name="Braeken M."/>
            <person name="Weltjens I."/>
            <person name="Voet M."/>
            <person name="Bastiaens I."/>
            <person name="Aert R."/>
            <person name="Defoor E."/>
            <person name="Weitzenegger T."/>
            <person name="Bothe G."/>
            <person name="Ramsperger U."/>
            <person name="Hilbert H."/>
            <person name="Braun M."/>
            <person name="Holzer E."/>
            <person name="Brandt A."/>
            <person name="Peters S."/>
            <person name="van Staveren M."/>
            <person name="Dirkse W."/>
            <person name="Mooijman P."/>
            <person name="Klein Lankhorst R."/>
            <person name="Rose M."/>
            <person name="Hauf J."/>
            <person name="Koetter P."/>
            <person name="Berneiser S."/>
            <person name="Hempel S."/>
            <person name="Feldpausch M."/>
            <person name="Lamberth S."/>
            <person name="Van den Daele H."/>
            <person name="De Keyser A."/>
            <person name="Buysshaert C."/>
            <person name="Gielen J."/>
            <person name="Villarroel R."/>
            <person name="De Clercq R."/>
            <person name="van Montagu M."/>
            <person name="Rogers J."/>
            <person name="Cronin A."/>
            <person name="Quail M.A."/>
            <person name="Bray-Allen S."/>
            <person name="Clark L."/>
            <person name="Doggett J."/>
            <person name="Hall S."/>
            <person name="Kay M."/>
            <person name="Lennard N."/>
            <person name="McLay K."/>
            <person name="Mayes R."/>
            <person name="Pettett A."/>
            <person name="Rajandream M.A."/>
            <person name="Lyne M."/>
            <person name="Benes V."/>
            <person name="Rechmann S."/>
            <person name="Borkova D."/>
            <person name="Bloecker H."/>
            <person name="Scharfe M."/>
            <person name="Grimm M."/>
            <person name="Loehnert T.-H."/>
            <person name="Dose S."/>
            <person name="de Haan M."/>
            <person name="Maarse A.C."/>
            <person name="Schaefer M."/>
            <person name="Mueller-Auer S."/>
            <person name="Gabel C."/>
            <person name="Fuchs M."/>
            <person name="Fartmann B."/>
            <person name="Granderath K."/>
            <person name="Dauner D."/>
            <person name="Herzl A."/>
            <person name="Neumann S."/>
            <person name="Argiriou A."/>
            <person name="Vitale D."/>
            <person name="Liguori R."/>
            <person name="Piravandi E."/>
            <person name="Massenet O."/>
            <person name="Quigley F."/>
            <person name="Clabauld G."/>
            <person name="Muendlein A."/>
            <person name="Felber R."/>
            <person name="Schnabl S."/>
            <person name="Hiller R."/>
            <person name="Schmidt W."/>
            <person name="Lecharny A."/>
            <person name="Aubourg S."/>
            <person name="Chefdor F."/>
            <person name="Cooke R."/>
            <person name="Berger C."/>
            <person name="Monfort A."/>
            <person name="Casacuberta E."/>
            <person name="Gibbons T."/>
            <person name="Weber N."/>
            <person name="Vandenbol M."/>
            <person name="Bargues M."/>
            <person name="Terol J."/>
            <person name="Torres A."/>
            <person name="Perez-Perez A."/>
            <person name="Purnelle B."/>
            <person name="Bent E."/>
            <person name="Johnson S."/>
            <person name="Tacon D."/>
            <person name="Jesse T."/>
            <person name="Heijnen L."/>
            <person name="Schwarz S."/>
            <person name="Scholler P."/>
            <person name="Heber S."/>
            <person name="Francs P."/>
            <person name="Bielke C."/>
            <person name="Frishman D."/>
            <person name="Haase D."/>
            <person name="Lemcke K."/>
            <person name="Mewes H.-W."/>
            <person name="Stocker S."/>
            <person name="Zaccaria P."/>
            <person name="Bevan M."/>
            <person name="Wilson R.K."/>
            <person name="de la Bastide M."/>
            <person name="Habermann K."/>
            <person name="Parnell L."/>
            <person name="Dedhia N."/>
            <person name="Gnoj L."/>
            <person name="Schutz K."/>
            <person name="Huang E."/>
            <person name="Spiegel L."/>
            <person name="Sekhon M."/>
            <person name="Murray J."/>
            <person name="Sheet P."/>
            <person name="Cordes M."/>
            <person name="Abu-Threideh J."/>
            <person name="Stoneking T."/>
            <person name="Kalicki J."/>
            <person name="Graves T."/>
            <person name="Harmon G."/>
            <person name="Edwards J."/>
            <person name="Latreille P."/>
            <person name="Courtney L."/>
            <person name="Cloud J."/>
            <person name="Abbott A."/>
            <person name="Scott K."/>
            <person name="Johnson D."/>
            <person name="Minx P."/>
            <person name="Bentley D."/>
            <person name="Fulton B."/>
            <person name="Miller N."/>
            <person name="Greco T."/>
            <person name="Kemp K."/>
            <person name="Kramer J."/>
            <person name="Fulton L."/>
            <person name="Mardis E."/>
            <person name="Dante M."/>
            <person name="Pepin K."/>
            <person name="Hillier L.W."/>
            <person name="Nelson J."/>
            <person name="Spieth J."/>
            <person name="Ryan E."/>
            <person name="Andrews S."/>
            <person name="Geisel C."/>
            <person name="Layman D."/>
            <person name="Du H."/>
            <person name="Ali J."/>
            <person name="Berghoff A."/>
            <person name="Jones K."/>
            <person name="Drone K."/>
            <person name="Cotton M."/>
            <person name="Joshu C."/>
            <person name="Antonoiu B."/>
            <person name="Zidanic M."/>
            <person name="Strong C."/>
            <person name="Sun H."/>
            <person name="Lamar B."/>
            <person name="Yordan C."/>
            <person name="Ma P."/>
            <person name="Zhong J."/>
            <person name="Preston R."/>
            <person name="Vil D."/>
            <person name="Shekher M."/>
            <person name="Matero A."/>
            <person name="Shah R."/>
            <person name="Swaby I.K."/>
            <person name="O'Shaughnessy A."/>
            <person name="Rodriguez M."/>
            <person name="Hoffman J."/>
            <person name="Till S."/>
            <person name="Granat S."/>
            <person name="Shohdy N."/>
            <person name="Hasegawa A."/>
            <person name="Hameed A."/>
            <person name="Lodhi M."/>
            <person name="Johnson A."/>
            <person name="Chen E."/>
            <person name="Marra M.A."/>
            <person name="Martienssen R."/>
            <person name="McCombie W.R."/>
        </authorList>
    </citation>
    <scope>NUCLEOTIDE SEQUENCE [LARGE SCALE GENOMIC DNA]</scope>
    <source>
        <strain>cv. Columbia</strain>
    </source>
</reference>
<reference key="3">
    <citation type="journal article" date="2017" name="Plant J.">
        <title>Araport11: a complete reannotation of the Arabidopsis thaliana reference genome.</title>
        <authorList>
            <person name="Cheng C.Y."/>
            <person name="Krishnakumar V."/>
            <person name="Chan A.P."/>
            <person name="Thibaud-Nissen F."/>
            <person name="Schobel S."/>
            <person name="Town C.D."/>
        </authorList>
    </citation>
    <scope>GENOME REANNOTATION</scope>
    <source>
        <strain>cv. Columbia</strain>
    </source>
</reference>
<organism>
    <name type="scientific">Arabidopsis thaliana</name>
    <name type="common">Mouse-ear cress</name>
    <dbReference type="NCBI Taxonomy" id="3702"/>
    <lineage>
        <taxon>Eukaryota</taxon>
        <taxon>Viridiplantae</taxon>
        <taxon>Streptophyta</taxon>
        <taxon>Embryophyta</taxon>
        <taxon>Tracheophyta</taxon>
        <taxon>Spermatophyta</taxon>
        <taxon>Magnoliopsida</taxon>
        <taxon>eudicotyledons</taxon>
        <taxon>Gunneridae</taxon>
        <taxon>Pentapetalae</taxon>
        <taxon>rosids</taxon>
        <taxon>malvids</taxon>
        <taxon>Brassicales</taxon>
        <taxon>Brassicaceae</taxon>
        <taxon>Camelineae</taxon>
        <taxon>Arabidopsis</taxon>
    </lineage>
</organism>